<proteinExistence type="inferred from homology"/>
<dbReference type="EC" id="7.3.2.5" evidence="1"/>
<dbReference type="EMBL" id="CP000026">
    <property type="protein sequence ID" value="AAV77877.1"/>
    <property type="molecule type" value="Genomic_DNA"/>
</dbReference>
<dbReference type="RefSeq" id="WP_000891710.1">
    <property type="nucleotide sequence ID" value="NC_006511.1"/>
</dbReference>
<dbReference type="SMR" id="Q5PG54"/>
<dbReference type="KEGG" id="spt:SPA1969"/>
<dbReference type="HOGENOM" id="CLU_000604_1_1_6"/>
<dbReference type="Proteomes" id="UP000008185">
    <property type="component" value="Chromosome"/>
</dbReference>
<dbReference type="GO" id="GO:0005886">
    <property type="term" value="C:plasma membrane"/>
    <property type="evidence" value="ECO:0007669"/>
    <property type="project" value="UniProtKB-SubCell"/>
</dbReference>
<dbReference type="GO" id="GO:0015412">
    <property type="term" value="F:ABC-type molybdate transporter activity"/>
    <property type="evidence" value="ECO:0007669"/>
    <property type="project" value="UniProtKB-EC"/>
</dbReference>
<dbReference type="GO" id="GO:0005524">
    <property type="term" value="F:ATP binding"/>
    <property type="evidence" value="ECO:0007669"/>
    <property type="project" value="UniProtKB-KW"/>
</dbReference>
<dbReference type="GO" id="GO:0016887">
    <property type="term" value="F:ATP hydrolysis activity"/>
    <property type="evidence" value="ECO:0007669"/>
    <property type="project" value="InterPro"/>
</dbReference>
<dbReference type="FunFam" id="2.40.50.100:FF:000037">
    <property type="entry name" value="Molybdenum import ATP-binding protein ModC"/>
    <property type="match status" value="1"/>
</dbReference>
<dbReference type="FunFam" id="3.40.50.300:FF:000634">
    <property type="entry name" value="Molybdenum import ATP-binding protein ModC"/>
    <property type="match status" value="1"/>
</dbReference>
<dbReference type="Gene3D" id="2.40.50.100">
    <property type="match status" value="1"/>
</dbReference>
<dbReference type="Gene3D" id="3.40.50.300">
    <property type="entry name" value="P-loop containing nucleotide triphosphate hydrolases"/>
    <property type="match status" value="1"/>
</dbReference>
<dbReference type="InterPro" id="IPR003593">
    <property type="entry name" value="AAA+_ATPase"/>
</dbReference>
<dbReference type="InterPro" id="IPR003439">
    <property type="entry name" value="ABC_transporter-like_ATP-bd"/>
</dbReference>
<dbReference type="InterPro" id="IPR017871">
    <property type="entry name" value="ABC_transporter-like_CS"/>
</dbReference>
<dbReference type="InterPro" id="IPR008995">
    <property type="entry name" value="Mo/tungstate-bd_C_term_dom"/>
</dbReference>
<dbReference type="InterPro" id="IPR011868">
    <property type="entry name" value="ModC_ABC_ATP-bd"/>
</dbReference>
<dbReference type="InterPro" id="IPR050334">
    <property type="entry name" value="Molybdenum_import_ModC"/>
</dbReference>
<dbReference type="InterPro" id="IPR004606">
    <property type="entry name" value="Mop_domain"/>
</dbReference>
<dbReference type="InterPro" id="IPR027417">
    <property type="entry name" value="P-loop_NTPase"/>
</dbReference>
<dbReference type="InterPro" id="IPR005116">
    <property type="entry name" value="Transp-assoc_OB_typ1"/>
</dbReference>
<dbReference type="NCBIfam" id="TIGR02142">
    <property type="entry name" value="modC_ABC"/>
    <property type="match status" value="1"/>
</dbReference>
<dbReference type="NCBIfam" id="TIGR00638">
    <property type="entry name" value="Mop"/>
    <property type="match status" value="1"/>
</dbReference>
<dbReference type="NCBIfam" id="NF008355">
    <property type="entry name" value="PRK11144.1"/>
    <property type="match status" value="1"/>
</dbReference>
<dbReference type="PANTHER" id="PTHR43514">
    <property type="entry name" value="ABC TRANSPORTER I FAMILY MEMBER 10"/>
    <property type="match status" value="1"/>
</dbReference>
<dbReference type="PANTHER" id="PTHR43514:SF4">
    <property type="entry name" value="ABC TRANSPORTER I FAMILY MEMBER 10"/>
    <property type="match status" value="1"/>
</dbReference>
<dbReference type="Pfam" id="PF00005">
    <property type="entry name" value="ABC_tran"/>
    <property type="match status" value="1"/>
</dbReference>
<dbReference type="Pfam" id="PF03459">
    <property type="entry name" value="TOBE"/>
    <property type="match status" value="1"/>
</dbReference>
<dbReference type="SMART" id="SM00382">
    <property type="entry name" value="AAA"/>
    <property type="match status" value="1"/>
</dbReference>
<dbReference type="SUPFAM" id="SSF50331">
    <property type="entry name" value="MOP-like"/>
    <property type="match status" value="1"/>
</dbReference>
<dbReference type="SUPFAM" id="SSF52540">
    <property type="entry name" value="P-loop containing nucleoside triphosphate hydrolases"/>
    <property type="match status" value="1"/>
</dbReference>
<dbReference type="PROSITE" id="PS00211">
    <property type="entry name" value="ABC_TRANSPORTER_1"/>
    <property type="match status" value="1"/>
</dbReference>
<dbReference type="PROSITE" id="PS50893">
    <property type="entry name" value="ABC_TRANSPORTER_2"/>
    <property type="match status" value="1"/>
</dbReference>
<dbReference type="PROSITE" id="PS51241">
    <property type="entry name" value="MODC"/>
    <property type="match status" value="1"/>
</dbReference>
<dbReference type="PROSITE" id="PS51866">
    <property type="entry name" value="MOP"/>
    <property type="match status" value="1"/>
</dbReference>
<keyword id="KW-0067">ATP-binding</keyword>
<keyword id="KW-0997">Cell inner membrane</keyword>
<keyword id="KW-1003">Cell membrane</keyword>
<keyword id="KW-0472">Membrane</keyword>
<keyword id="KW-0500">Molybdenum</keyword>
<keyword id="KW-0547">Nucleotide-binding</keyword>
<keyword id="KW-1278">Translocase</keyword>
<keyword id="KW-0813">Transport</keyword>
<gene>
    <name evidence="1" type="primary">modC</name>
    <name type="ordered locus">SPA1969</name>
</gene>
<name>MODC_SALPA</name>
<evidence type="ECO:0000255" key="1">
    <source>
        <dbReference type="HAMAP-Rule" id="MF_01705"/>
    </source>
</evidence>
<evidence type="ECO:0000255" key="2">
    <source>
        <dbReference type="PROSITE-ProRule" id="PRU01213"/>
    </source>
</evidence>
<feature type="chain" id="PRO_0000271690" description="Molybdenum import ATP-binding protein ModC">
    <location>
        <begin position="1"/>
        <end position="352"/>
    </location>
</feature>
<feature type="domain" description="ABC transporter" evidence="1">
    <location>
        <begin position="1"/>
        <end position="229"/>
    </location>
</feature>
<feature type="domain" description="Mop" evidence="2">
    <location>
        <begin position="289"/>
        <end position="352"/>
    </location>
</feature>
<feature type="binding site" evidence="1">
    <location>
        <begin position="31"/>
        <end position="38"/>
    </location>
    <ligand>
        <name>ATP</name>
        <dbReference type="ChEBI" id="CHEBI:30616"/>
    </ligand>
</feature>
<accession>Q5PG54</accession>
<organism>
    <name type="scientific">Salmonella paratyphi A (strain ATCC 9150 / SARB42)</name>
    <dbReference type="NCBI Taxonomy" id="295319"/>
    <lineage>
        <taxon>Bacteria</taxon>
        <taxon>Pseudomonadati</taxon>
        <taxon>Pseudomonadota</taxon>
        <taxon>Gammaproteobacteria</taxon>
        <taxon>Enterobacterales</taxon>
        <taxon>Enterobacteriaceae</taxon>
        <taxon>Salmonella</taxon>
    </lineage>
</organism>
<sequence length="352" mass="39055">MLELNFSQTLGTHCLTLNETLPASGITAIFGVSGAGKTSLINAISGLTRPQKGRIALNGRVLHDAENGICLTPEKRRIGYVFQDARLFPHYKVRGNLRYGMAKSMTGQFDKLVSLLGIEALLDRLPGSLSGGEKQRVAIGRALLTAPELLLLDEPLASLDIPRKRELLPYLQRLAREINIPMLYVSHSLDEILHLADKVMVLEDGQVKAFGPLEEVWGSSVMHPWLPKEQQSSILKVSVLEHHPHYAMTALALGDQHLWVNKLNQPLQSTLRIRIQASDVSLVLQPPQQTSIRNVLRAKVANCYDDNGQVEVQLEIGGRTLWARISPWARDELNIKPGLWLYAQVKSVSITA</sequence>
<comment type="function">
    <text evidence="1">Part of the ABC transporter complex ModABC involved in molybdenum import. Responsible for energy coupling to the transport system.</text>
</comment>
<comment type="catalytic activity">
    <reaction evidence="1">
        <text>molybdate(out) + ATP + H2O = molybdate(in) + ADP + phosphate + H(+)</text>
        <dbReference type="Rhea" id="RHEA:22020"/>
        <dbReference type="ChEBI" id="CHEBI:15377"/>
        <dbReference type="ChEBI" id="CHEBI:15378"/>
        <dbReference type="ChEBI" id="CHEBI:30616"/>
        <dbReference type="ChEBI" id="CHEBI:36264"/>
        <dbReference type="ChEBI" id="CHEBI:43474"/>
        <dbReference type="ChEBI" id="CHEBI:456216"/>
        <dbReference type="EC" id="7.3.2.5"/>
    </reaction>
</comment>
<comment type="subunit">
    <text evidence="1">The complex is composed of two ATP-binding proteins (ModC), two transmembrane proteins (ModB) and a solute-binding protein (ModA).</text>
</comment>
<comment type="subcellular location">
    <subcellularLocation>
        <location evidence="1">Cell inner membrane</location>
        <topology evidence="1">Peripheral membrane protein</topology>
    </subcellularLocation>
</comment>
<comment type="similarity">
    <text evidence="1">Belongs to the ABC transporter superfamily. Molybdate importer (TC 3.A.1.8) family.</text>
</comment>
<reference key="1">
    <citation type="journal article" date="2004" name="Nat. Genet.">
        <title>Comparison of genome degradation in Paratyphi A and Typhi, human-restricted serovars of Salmonella enterica that cause typhoid.</title>
        <authorList>
            <person name="McClelland M."/>
            <person name="Sanderson K.E."/>
            <person name="Clifton S.W."/>
            <person name="Latreille P."/>
            <person name="Porwollik S."/>
            <person name="Sabo A."/>
            <person name="Meyer R."/>
            <person name="Bieri T."/>
            <person name="Ozersky P."/>
            <person name="McLellan M."/>
            <person name="Harkins C.R."/>
            <person name="Wang C."/>
            <person name="Nguyen C."/>
            <person name="Berghoff A."/>
            <person name="Elliott G."/>
            <person name="Kohlberg S."/>
            <person name="Strong C."/>
            <person name="Du F."/>
            <person name="Carter J."/>
            <person name="Kremizki C."/>
            <person name="Layman D."/>
            <person name="Leonard S."/>
            <person name="Sun H."/>
            <person name="Fulton L."/>
            <person name="Nash W."/>
            <person name="Miner T."/>
            <person name="Minx P."/>
            <person name="Delehaunty K."/>
            <person name="Fronick C."/>
            <person name="Magrini V."/>
            <person name="Nhan M."/>
            <person name="Warren W."/>
            <person name="Florea L."/>
            <person name="Spieth J."/>
            <person name="Wilson R.K."/>
        </authorList>
    </citation>
    <scope>NUCLEOTIDE SEQUENCE [LARGE SCALE GENOMIC DNA]</scope>
    <source>
        <strain>ATCC 9150 / SARB42</strain>
    </source>
</reference>
<protein>
    <recommendedName>
        <fullName evidence="1">Molybdenum import ATP-binding protein ModC</fullName>
        <ecNumber evidence="1">7.3.2.5</ecNumber>
    </recommendedName>
</protein>